<feature type="chain" id="PRO_0000143275" description="Maturase K">
    <location>
        <begin position="1"/>
        <end position="509"/>
    </location>
</feature>
<evidence type="ECO:0000255" key="1">
    <source>
        <dbReference type="HAMAP-Rule" id="MF_01390"/>
    </source>
</evidence>
<reference key="1">
    <citation type="journal article" date="2005" name="Aust. Syst. Bot.">
        <title>An assessment of old and new DNA sequence evidence for the paraphyly of Banksia with respect to Dryandra (Proteaceae).</title>
        <authorList>
            <person name="Mast A.R."/>
            <person name="Jones E.H."/>
            <person name="Havery S.P."/>
        </authorList>
    </citation>
    <scope>NUCLEOTIDE SEQUENCE [GENOMIC DNA]</scope>
</reference>
<accession>Q52ZX4</accession>
<name>MATK_BANCU</name>
<dbReference type="EMBL" id="AY823165">
    <property type="protein sequence ID" value="AAV80253.1"/>
    <property type="molecule type" value="Genomic_DNA"/>
</dbReference>
<dbReference type="GO" id="GO:0009507">
    <property type="term" value="C:chloroplast"/>
    <property type="evidence" value="ECO:0007669"/>
    <property type="project" value="UniProtKB-SubCell"/>
</dbReference>
<dbReference type="GO" id="GO:0003723">
    <property type="term" value="F:RNA binding"/>
    <property type="evidence" value="ECO:0007669"/>
    <property type="project" value="UniProtKB-KW"/>
</dbReference>
<dbReference type="GO" id="GO:0006397">
    <property type="term" value="P:mRNA processing"/>
    <property type="evidence" value="ECO:0007669"/>
    <property type="project" value="UniProtKB-KW"/>
</dbReference>
<dbReference type="GO" id="GO:0008380">
    <property type="term" value="P:RNA splicing"/>
    <property type="evidence" value="ECO:0007669"/>
    <property type="project" value="UniProtKB-UniRule"/>
</dbReference>
<dbReference type="GO" id="GO:0008033">
    <property type="term" value="P:tRNA processing"/>
    <property type="evidence" value="ECO:0007669"/>
    <property type="project" value="UniProtKB-KW"/>
</dbReference>
<dbReference type="HAMAP" id="MF_01390">
    <property type="entry name" value="MatK"/>
    <property type="match status" value="1"/>
</dbReference>
<dbReference type="InterPro" id="IPR024937">
    <property type="entry name" value="Domain_X"/>
</dbReference>
<dbReference type="InterPro" id="IPR002866">
    <property type="entry name" value="Maturase_MatK"/>
</dbReference>
<dbReference type="InterPro" id="IPR024942">
    <property type="entry name" value="Maturase_MatK_N"/>
</dbReference>
<dbReference type="PANTHER" id="PTHR34811">
    <property type="entry name" value="MATURASE K"/>
    <property type="match status" value="1"/>
</dbReference>
<dbReference type="PANTHER" id="PTHR34811:SF1">
    <property type="entry name" value="MATURASE K"/>
    <property type="match status" value="1"/>
</dbReference>
<dbReference type="Pfam" id="PF01348">
    <property type="entry name" value="Intron_maturas2"/>
    <property type="match status" value="1"/>
</dbReference>
<dbReference type="Pfam" id="PF01824">
    <property type="entry name" value="MatK_N"/>
    <property type="match status" value="1"/>
</dbReference>
<proteinExistence type="inferred from homology"/>
<sequence>MEELQEYLKIEKSWQQDFLYPLFFQEYIYTLAHDHGLNRSILYESAENLGYDNKSSSLIVKRFIDRMYQQNHFIISSNSNSSNQKKFLGHNKNLDLKIISEGFAVIVEIPFSLRLVSSLEGKELVKSCNLRSIHSIFSFLEDKFSHLNYVSDILIPHPIHPEILVQAFRVWVQDVPSLHLLRFFLYEYRNWNSLITPKKSIYTFSKENQRFFLFLYNFYVYKYESMFVFLRKQSSHLRSTSFGALLERTHFYGKREHLVVLFRNDFQSTLCLVKDPFIHYVRYQAKSFLAARGTPLMMNKWKYYLVNFWQSYFYFWSQPGRIHINQLSNYSLDFLGYLSSVRLTFSVVRSQMLENSFLIDIAIKKFDTIVPIIPLLGSLAKAKFCNALGHPISKPVRTASSDFDIIDRFGRICKNLFHYHSGSSKKKSLYRIKYILRLSCARTLARKHKSTVRAFLKRLGSELFEEFFTEEEEVLSLIFPRASSPLRRLYRERVWYLDIIRISDLVNHD</sequence>
<geneLocation type="chloroplast"/>
<protein>
    <recommendedName>
        <fullName evidence="1">Maturase K</fullName>
    </recommendedName>
    <alternativeName>
        <fullName evidence="1">Intron maturase</fullName>
    </alternativeName>
</protein>
<keyword id="KW-0150">Chloroplast</keyword>
<keyword id="KW-0507">mRNA processing</keyword>
<keyword id="KW-0934">Plastid</keyword>
<keyword id="KW-0694">RNA-binding</keyword>
<keyword id="KW-0819">tRNA processing</keyword>
<organism>
    <name type="scientific">Banksia cuneata</name>
    <name type="common">Quairading banksia</name>
    <name type="synonym">Matchstick banksia</name>
    <dbReference type="NCBI Taxonomy" id="83699"/>
    <lineage>
        <taxon>Eukaryota</taxon>
        <taxon>Viridiplantae</taxon>
        <taxon>Streptophyta</taxon>
        <taxon>Embryophyta</taxon>
        <taxon>Tracheophyta</taxon>
        <taxon>Spermatophyta</taxon>
        <taxon>Magnoliopsida</taxon>
        <taxon>Proteales</taxon>
        <taxon>Proteaceae</taxon>
        <taxon>Banksia</taxon>
    </lineage>
</organism>
<comment type="function">
    <text evidence="1">Usually encoded in the trnK tRNA gene intron. Probably assists in splicing its own and other chloroplast group II introns.</text>
</comment>
<comment type="subcellular location">
    <subcellularLocation>
        <location>Plastid</location>
        <location>Chloroplast</location>
    </subcellularLocation>
</comment>
<comment type="similarity">
    <text evidence="1">Belongs to the intron maturase 2 family. MatK subfamily.</text>
</comment>
<gene>
    <name evidence="1" type="primary">matK</name>
</gene>